<protein>
    <recommendedName>
        <fullName evidence="1">Iron-sulfur cluster assembly protein CyaY</fullName>
    </recommendedName>
</protein>
<reference key="1">
    <citation type="journal article" date="2011" name="J. Bacteriol.">
        <title>Comparative genomics of 28 Salmonella enterica isolates: evidence for CRISPR-mediated adaptive sublineage evolution.</title>
        <authorList>
            <person name="Fricke W.F."/>
            <person name="Mammel M.K."/>
            <person name="McDermott P.F."/>
            <person name="Tartera C."/>
            <person name="White D.G."/>
            <person name="Leclerc J.E."/>
            <person name="Ravel J."/>
            <person name="Cebula T.A."/>
        </authorList>
    </citation>
    <scope>NUCLEOTIDE SEQUENCE [LARGE SCALE GENOMIC DNA]</scope>
    <source>
        <strain>CVM19633</strain>
    </source>
</reference>
<sequence>MNDSEFHRLADALWLTIEERLDSWDGDSDIDCEINGGVLTLSFENGSKIIINRQEPLHQVWLATKQGGYHFDLKGDEWICDRSGETFWDLLGQAATQQAGEKVSFR</sequence>
<dbReference type="EMBL" id="CP001127">
    <property type="protein sequence ID" value="ACF90763.1"/>
    <property type="molecule type" value="Genomic_DNA"/>
</dbReference>
<dbReference type="RefSeq" id="WP_000999928.1">
    <property type="nucleotide sequence ID" value="NC_011094.1"/>
</dbReference>
<dbReference type="SMR" id="B4TNV5"/>
<dbReference type="KEGG" id="sew:SeSA_A4153"/>
<dbReference type="HOGENOM" id="CLU_080880_3_0_6"/>
<dbReference type="Proteomes" id="UP000001865">
    <property type="component" value="Chromosome"/>
</dbReference>
<dbReference type="GO" id="GO:0005829">
    <property type="term" value="C:cytosol"/>
    <property type="evidence" value="ECO:0007669"/>
    <property type="project" value="TreeGrafter"/>
</dbReference>
<dbReference type="GO" id="GO:0008199">
    <property type="term" value="F:ferric iron binding"/>
    <property type="evidence" value="ECO:0007669"/>
    <property type="project" value="InterPro"/>
</dbReference>
<dbReference type="GO" id="GO:0008198">
    <property type="term" value="F:ferrous iron binding"/>
    <property type="evidence" value="ECO:0007669"/>
    <property type="project" value="TreeGrafter"/>
</dbReference>
<dbReference type="GO" id="GO:0016226">
    <property type="term" value="P:iron-sulfur cluster assembly"/>
    <property type="evidence" value="ECO:0007669"/>
    <property type="project" value="UniProtKB-UniRule"/>
</dbReference>
<dbReference type="CDD" id="cd00503">
    <property type="entry name" value="Frataxin"/>
    <property type="match status" value="1"/>
</dbReference>
<dbReference type="FunFam" id="3.30.920.10:FF:000001">
    <property type="entry name" value="Iron-sulfur cluster assembly protein CyaY"/>
    <property type="match status" value="1"/>
</dbReference>
<dbReference type="Gene3D" id="3.30.920.10">
    <property type="entry name" value="Frataxin/CyaY"/>
    <property type="match status" value="1"/>
</dbReference>
<dbReference type="HAMAP" id="MF_00142">
    <property type="entry name" value="CyaY"/>
    <property type="match status" value="1"/>
</dbReference>
<dbReference type="InterPro" id="IPR047584">
    <property type="entry name" value="CyaY"/>
</dbReference>
<dbReference type="InterPro" id="IPR002908">
    <property type="entry name" value="Frataxin/CyaY"/>
</dbReference>
<dbReference type="InterPro" id="IPR036524">
    <property type="entry name" value="Frataxin/CyaY_sf"/>
</dbReference>
<dbReference type="InterPro" id="IPR020895">
    <property type="entry name" value="Frataxin_CS"/>
</dbReference>
<dbReference type="NCBIfam" id="TIGR03421">
    <property type="entry name" value="FeS_CyaY"/>
    <property type="match status" value="1"/>
</dbReference>
<dbReference type="PANTHER" id="PTHR16821">
    <property type="entry name" value="FRATAXIN"/>
    <property type="match status" value="1"/>
</dbReference>
<dbReference type="PANTHER" id="PTHR16821:SF2">
    <property type="entry name" value="FRATAXIN, MITOCHONDRIAL"/>
    <property type="match status" value="1"/>
</dbReference>
<dbReference type="Pfam" id="PF01491">
    <property type="entry name" value="Frataxin_Cyay"/>
    <property type="match status" value="1"/>
</dbReference>
<dbReference type="SMART" id="SM01219">
    <property type="entry name" value="Frataxin_Cyay"/>
    <property type="match status" value="1"/>
</dbReference>
<dbReference type="SUPFAM" id="SSF55387">
    <property type="entry name" value="Frataxin/Nqo15-like"/>
    <property type="match status" value="1"/>
</dbReference>
<dbReference type="PROSITE" id="PS01344">
    <property type="entry name" value="FRATAXIN_1"/>
    <property type="match status" value="1"/>
</dbReference>
<dbReference type="PROSITE" id="PS50810">
    <property type="entry name" value="FRATAXIN_2"/>
    <property type="match status" value="1"/>
</dbReference>
<proteinExistence type="inferred from homology"/>
<feature type="chain" id="PRO_1000096258" description="Iron-sulfur cluster assembly protein CyaY">
    <location>
        <begin position="1"/>
        <end position="106"/>
    </location>
</feature>
<gene>
    <name evidence="1" type="primary">cyaY</name>
    <name type="ordered locus">SeSA_A4153</name>
</gene>
<keyword id="KW-0408">Iron</keyword>
<keyword id="KW-0479">Metal-binding</keyword>
<comment type="function">
    <text evidence="1">Involved in iron-sulfur (Fe-S) cluster assembly. May act as a regulator of Fe-S biogenesis.</text>
</comment>
<comment type="similarity">
    <text evidence="1">Belongs to the frataxin family.</text>
</comment>
<evidence type="ECO:0000255" key="1">
    <source>
        <dbReference type="HAMAP-Rule" id="MF_00142"/>
    </source>
</evidence>
<accession>B4TNV5</accession>
<organism>
    <name type="scientific">Salmonella schwarzengrund (strain CVM19633)</name>
    <dbReference type="NCBI Taxonomy" id="439843"/>
    <lineage>
        <taxon>Bacteria</taxon>
        <taxon>Pseudomonadati</taxon>
        <taxon>Pseudomonadota</taxon>
        <taxon>Gammaproteobacteria</taxon>
        <taxon>Enterobacterales</taxon>
        <taxon>Enterobacteriaceae</taxon>
        <taxon>Salmonella</taxon>
    </lineage>
</organism>
<name>CYAY_SALSV</name>